<comment type="function">
    <text evidence="1">May play a role in stationary phase survival.</text>
</comment>
<comment type="catalytic activity">
    <reaction>
        <text>alpha-D-glucose 1-phosphate + UTP + H(+) = UDP-alpha-D-glucose + diphosphate</text>
        <dbReference type="Rhea" id="RHEA:19889"/>
        <dbReference type="ChEBI" id="CHEBI:15378"/>
        <dbReference type="ChEBI" id="CHEBI:33019"/>
        <dbReference type="ChEBI" id="CHEBI:46398"/>
        <dbReference type="ChEBI" id="CHEBI:58601"/>
        <dbReference type="ChEBI" id="CHEBI:58885"/>
        <dbReference type="EC" id="2.7.7.9"/>
    </reaction>
</comment>
<comment type="similarity">
    <text evidence="2">Belongs to the UDPGP type 2 family.</text>
</comment>
<accession>Q9F664</accession>
<dbReference type="EC" id="2.7.7.9"/>
<dbReference type="EMBL" id="AF297520">
    <property type="protein sequence ID" value="AAG23691.1"/>
    <property type="molecule type" value="Genomic_DNA"/>
</dbReference>
<dbReference type="EMBL" id="AE017143">
    <property type="protein sequence ID" value="AAP96237.1"/>
    <property type="molecule type" value="Genomic_DNA"/>
</dbReference>
<dbReference type="RefSeq" id="WP_010945286.1">
    <property type="nucleotide sequence ID" value="NC_002940.2"/>
</dbReference>
<dbReference type="SMR" id="Q9F664"/>
<dbReference type="STRING" id="233412.HD_1431"/>
<dbReference type="KEGG" id="hdu:HD_1431"/>
<dbReference type="eggNOG" id="COG1210">
    <property type="taxonomic scope" value="Bacteria"/>
</dbReference>
<dbReference type="HOGENOM" id="CLU_029499_1_2_6"/>
<dbReference type="OrthoDB" id="9803306at2"/>
<dbReference type="Proteomes" id="UP000001022">
    <property type="component" value="Chromosome"/>
</dbReference>
<dbReference type="GO" id="GO:0003983">
    <property type="term" value="F:UTP:glucose-1-phosphate uridylyltransferase activity"/>
    <property type="evidence" value="ECO:0007669"/>
    <property type="project" value="UniProtKB-EC"/>
</dbReference>
<dbReference type="GO" id="GO:0009058">
    <property type="term" value="P:biosynthetic process"/>
    <property type="evidence" value="ECO:0007669"/>
    <property type="project" value="InterPro"/>
</dbReference>
<dbReference type="GO" id="GO:0006011">
    <property type="term" value="P:UDP-alpha-D-glucose metabolic process"/>
    <property type="evidence" value="ECO:0007669"/>
    <property type="project" value="InterPro"/>
</dbReference>
<dbReference type="CDD" id="cd02541">
    <property type="entry name" value="UGPase_prokaryotic"/>
    <property type="match status" value="1"/>
</dbReference>
<dbReference type="Gene3D" id="3.90.550.10">
    <property type="entry name" value="Spore Coat Polysaccharide Biosynthesis Protein SpsA, Chain A"/>
    <property type="match status" value="1"/>
</dbReference>
<dbReference type="InterPro" id="IPR005771">
    <property type="entry name" value="GalU_uridylyltTrfase_bac/arc"/>
</dbReference>
<dbReference type="InterPro" id="IPR005835">
    <property type="entry name" value="NTP_transferase_dom"/>
</dbReference>
<dbReference type="InterPro" id="IPR029044">
    <property type="entry name" value="Nucleotide-diphossugar_trans"/>
</dbReference>
<dbReference type="NCBIfam" id="TIGR01099">
    <property type="entry name" value="galU"/>
    <property type="match status" value="1"/>
</dbReference>
<dbReference type="PANTHER" id="PTHR43197">
    <property type="entry name" value="UTP--GLUCOSE-1-PHOSPHATE URIDYLYLTRANSFERASE"/>
    <property type="match status" value="1"/>
</dbReference>
<dbReference type="PANTHER" id="PTHR43197:SF1">
    <property type="entry name" value="UTP--GLUCOSE-1-PHOSPHATE URIDYLYLTRANSFERASE"/>
    <property type="match status" value="1"/>
</dbReference>
<dbReference type="Pfam" id="PF00483">
    <property type="entry name" value="NTP_transferase"/>
    <property type="match status" value="1"/>
</dbReference>
<dbReference type="SUPFAM" id="SSF53448">
    <property type="entry name" value="Nucleotide-diphospho-sugar transferases"/>
    <property type="match status" value="1"/>
</dbReference>
<feature type="chain" id="PRO_0000201357" description="UTP--glucose-1-phosphate uridylyltransferase">
    <location>
        <begin position="1"/>
        <end position="295"/>
    </location>
</feature>
<proteinExistence type="inferred from homology"/>
<name>GALU_HAEDU</name>
<reference key="1">
    <citation type="submission" date="2000-08" db="EMBL/GenBank/DDBJ databases">
        <title>Haemophilus ducreyi strain Hd9 strain produces a truncated lipooligosaccharide due to a mutation in UDP-glucose pyrophosphorylase (galU).</title>
        <authorList>
            <person name="Sun S."/>
            <person name="Gibson B.W."/>
            <person name="Campagnari A.A."/>
            <person name="Munson R.S. Jr."/>
        </authorList>
    </citation>
    <scope>NUCLEOTIDE SEQUENCE [GENOMIC DNA]</scope>
</reference>
<reference key="2">
    <citation type="submission" date="2003-06" db="EMBL/GenBank/DDBJ databases">
        <title>The complete genome sequence of Haemophilus ducreyi.</title>
        <authorList>
            <person name="Munson R.S. Jr."/>
            <person name="Ray W.C."/>
            <person name="Mahairas G."/>
            <person name="Sabo P."/>
            <person name="Mungur R."/>
            <person name="Johnson L."/>
            <person name="Nguyen D."/>
            <person name="Wang J."/>
            <person name="Forst C."/>
            <person name="Hood L."/>
        </authorList>
    </citation>
    <scope>NUCLEOTIDE SEQUENCE [LARGE SCALE GENOMIC DNA]</scope>
    <source>
        <strain>35000HP / ATCC 700724</strain>
    </source>
</reference>
<sequence length="295" mass="32518">MKVIIPVAGLGTRMLPATKAIPKEMLTIADKPLIQYIVNECVAAGIKEIVFVTHSSKNAIENHFDTSFELETMLEKRVKRQLLDEVRSIVPNDVTLMHVRQGQAKGLGHAVLCGKAVVGKEPFAVVLPDVILADFTANPKTENLAAMIKRFSETQCSQIMVAPVPQEDVSNYGIVDCATDNIRAGETAKIAKMVEKPSIENAPSNLAIVGRYVFSATIWDLLERTPVGVGDEIQLTDAIDMLIEKETVEAFHMTGRAFDCGDKLGYMEAFVEYSLRHEKCGQQFQKIIKELAKSL</sequence>
<evidence type="ECO:0000250" key="1"/>
<evidence type="ECO:0000305" key="2"/>
<protein>
    <recommendedName>
        <fullName>UTP--glucose-1-phosphate uridylyltransferase</fullName>
        <ecNumber>2.7.7.9</ecNumber>
    </recommendedName>
    <alternativeName>
        <fullName>Alpha-D-glucosyl-1-phosphate uridylyltransferase</fullName>
    </alternativeName>
    <alternativeName>
        <fullName>UDP-glucose pyrophosphorylase</fullName>
        <shortName>UDPGP</shortName>
    </alternativeName>
    <alternativeName>
        <fullName>Uridine diphosphoglucose pyrophosphorylase</fullName>
    </alternativeName>
</protein>
<gene>
    <name type="primary">galU</name>
    <name type="ordered locus">HD_1431</name>
</gene>
<keyword id="KW-0548">Nucleotidyltransferase</keyword>
<keyword id="KW-1185">Reference proteome</keyword>
<keyword id="KW-0808">Transferase</keyword>
<organism>
    <name type="scientific">Haemophilus ducreyi (strain 35000HP / ATCC 700724)</name>
    <dbReference type="NCBI Taxonomy" id="233412"/>
    <lineage>
        <taxon>Bacteria</taxon>
        <taxon>Pseudomonadati</taxon>
        <taxon>Pseudomonadota</taxon>
        <taxon>Gammaproteobacteria</taxon>
        <taxon>Pasteurellales</taxon>
        <taxon>Pasteurellaceae</taxon>
        <taxon>Haemophilus</taxon>
    </lineage>
</organism>